<evidence type="ECO:0000255" key="1">
    <source>
        <dbReference type="HAMAP-Rule" id="MF_01008"/>
    </source>
</evidence>
<evidence type="ECO:0000255" key="2">
    <source>
        <dbReference type="PROSITE-ProRule" id="PRU01076"/>
    </source>
</evidence>
<dbReference type="EMBL" id="AE016958">
    <property type="protein sequence ID" value="AAS04223.1"/>
    <property type="molecule type" value="Genomic_DNA"/>
</dbReference>
<dbReference type="RefSeq" id="WP_003872235.1">
    <property type="nucleotide sequence ID" value="NZ_CP106873.1"/>
</dbReference>
<dbReference type="SMR" id="Q73YP9"/>
<dbReference type="STRING" id="262316.MAP_1906c"/>
<dbReference type="GeneID" id="75269876"/>
<dbReference type="KEGG" id="mpa:MAP_1906c"/>
<dbReference type="eggNOG" id="COG2001">
    <property type="taxonomic scope" value="Bacteria"/>
</dbReference>
<dbReference type="HOGENOM" id="CLU_107907_0_5_11"/>
<dbReference type="Proteomes" id="UP000000580">
    <property type="component" value="Chromosome"/>
</dbReference>
<dbReference type="GO" id="GO:0005737">
    <property type="term" value="C:cytoplasm"/>
    <property type="evidence" value="ECO:0007669"/>
    <property type="project" value="UniProtKB-UniRule"/>
</dbReference>
<dbReference type="GO" id="GO:0009295">
    <property type="term" value="C:nucleoid"/>
    <property type="evidence" value="ECO:0007669"/>
    <property type="project" value="UniProtKB-SubCell"/>
</dbReference>
<dbReference type="GO" id="GO:0003700">
    <property type="term" value="F:DNA-binding transcription factor activity"/>
    <property type="evidence" value="ECO:0007669"/>
    <property type="project" value="UniProtKB-UniRule"/>
</dbReference>
<dbReference type="GO" id="GO:0000976">
    <property type="term" value="F:transcription cis-regulatory region binding"/>
    <property type="evidence" value="ECO:0007669"/>
    <property type="project" value="TreeGrafter"/>
</dbReference>
<dbReference type="GO" id="GO:2000143">
    <property type="term" value="P:negative regulation of DNA-templated transcription initiation"/>
    <property type="evidence" value="ECO:0007669"/>
    <property type="project" value="TreeGrafter"/>
</dbReference>
<dbReference type="CDD" id="cd16321">
    <property type="entry name" value="MraZ_C"/>
    <property type="match status" value="1"/>
</dbReference>
<dbReference type="CDD" id="cd16320">
    <property type="entry name" value="MraZ_N"/>
    <property type="match status" value="1"/>
</dbReference>
<dbReference type="FunFam" id="3.40.1550.20:FF:000004">
    <property type="entry name" value="Transcriptional regulator MraZ"/>
    <property type="match status" value="1"/>
</dbReference>
<dbReference type="Gene3D" id="3.40.1550.20">
    <property type="entry name" value="Transcriptional regulator MraZ domain"/>
    <property type="match status" value="1"/>
</dbReference>
<dbReference type="HAMAP" id="MF_01008">
    <property type="entry name" value="MraZ"/>
    <property type="match status" value="1"/>
</dbReference>
<dbReference type="InterPro" id="IPR003444">
    <property type="entry name" value="MraZ"/>
</dbReference>
<dbReference type="InterPro" id="IPR035644">
    <property type="entry name" value="MraZ_C"/>
</dbReference>
<dbReference type="InterPro" id="IPR020603">
    <property type="entry name" value="MraZ_dom"/>
</dbReference>
<dbReference type="InterPro" id="IPR035642">
    <property type="entry name" value="MraZ_N"/>
</dbReference>
<dbReference type="InterPro" id="IPR038619">
    <property type="entry name" value="MraZ_sf"/>
</dbReference>
<dbReference type="InterPro" id="IPR007159">
    <property type="entry name" value="SpoVT-AbrB_dom"/>
</dbReference>
<dbReference type="InterPro" id="IPR037914">
    <property type="entry name" value="SpoVT-AbrB_sf"/>
</dbReference>
<dbReference type="NCBIfam" id="TIGR00242">
    <property type="entry name" value="division/cell wall cluster transcriptional repressor MraZ"/>
    <property type="match status" value="1"/>
</dbReference>
<dbReference type="PANTHER" id="PTHR34701">
    <property type="entry name" value="TRANSCRIPTIONAL REGULATOR MRAZ"/>
    <property type="match status" value="1"/>
</dbReference>
<dbReference type="PANTHER" id="PTHR34701:SF1">
    <property type="entry name" value="TRANSCRIPTIONAL REGULATOR MRAZ"/>
    <property type="match status" value="1"/>
</dbReference>
<dbReference type="Pfam" id="PF02381">
    <property type="entry name" value="MraZ"/>
    <property type="match status" value="2"/>
</dbReference>
<dbReference type="SUPFAM" id="SSF89447">
    <property type="entry name" value="AbrB/MazE/MraZ-like"/>
    <property type="match status" value="1"/>
</dbReference>
<dbReference type="PROSITE" id="PS51740">
    <property type="entry name" value="SPOVT_ABRB"/>
    <property type="match status" value="2"/>
</dbReference>
<sequence>MFLGTYTPKLDDKGRLTLPAKFRDALAGGLMVTKSQDHSLAVYPRAEFEQLARRASKASKSNPDARAFLRNLAAGTDEQHPDAQGRITLSADHRRYASLSKDCVVIGAVDYLEIWDAQAWQDYQQTHEENFSAASDEALGDII</sequence>
<comment type="subunit">
    <text evidence="1">Forms oligomers.</text>
</comment>
<comment type="subcellular location">
    <subcellularLocation>
        <location evidence="1">Cytoplasm</location>
        <location evidence="1">Nucleoid</location>
    </subcellularLocation>
</comment>
<comment type="similarity">
    <text evidence="1">Belongs to the MraZ family.</text>
</comment>
<protein>
    <recommendedName>
        <fullName>Transcriptional regulator MraZ</fullName>
    </recommendedName>
</protein>
<feature type="chain" id="PRO_0000108507" description="Transcriptional regulator MraZ">
    <location>
        <begin position="1"/>
        <end position="143"/>
    </location>
</feature>
<feature type="domain" description="SpoVT-AbrB 1" evidence="2">
    <location>
        <begin position="5"/>
        <end position="47"/>
    </location>
</feature>
<feature type="domain" description="SpoVT-AbrB 2" evidence="2">
    <location>
        <begin position="76"/>
        <end position="119"/>
    </location>
</feature>
<reference key="1">
    <citation type="journal article" date="2005" name="Proc. Natl. Acad. Sci. U.S.A.">
        <title>The complete genome sequence of Mycobacterium avium subspecies paratuberculosis.</title>
        <authorList>
            <person name="Li L."/>
            <person name="Bannantine J.P."/>
            <person name="Zhang Q."/>
            <person name="Amonsin A."/>
            <person name="May B.J."/>
            <person name="Alt D."/>
            <person name="Banerji N."/>
            <person name="Kanjilal S."/>
            <person name="Kapur V."/>
        </authorList>
    </citation>
    <scope>NUCLEOTIDE SEQUENCE [LARGE SCALE GENOMIC DNA]</scope>
    <source>
        <strain>ATCC BAA-968 / K-10</strain>
    </source>
</reference>
<keyword id="KW-0963">Cytoplasm</keyword>
<keyword id="KW-0238">DNA-binding</keyword>
<keyword id="KW-1185">Reference proteome</keyword>
<keyword id="KW-0677">Repeat</keyword>
<keyword id="KW-0804">Transcription</keyword>
<keyword id="KW-0805">Transcription regulation</keyword>
<accession>Q73YP9</accession>
<name>MRAZ_MYCPA</name>
<proteinExistence type="inferred from homology"/>
<organism>
    <name type="scientific">Mycolicibacterium paratuberculosis (strain ATCC BAA-968 / K-10)</name>
    <name type="common">Mycobacterium paratuberculosis</name>
    <dbReference type="NCBI Taxonomy" id="262316"/>
    <lineage>
        <taxon>Bacteria</taxon>
        <taxon>Bacillati</taxon>
        <taxon>Actinomycetota</taxon>
        <taxon>Actinomycetes</taxon>
        <taxon>Mycobacteriales</taxon>
        <taxon>Mycobacteriaceae</taxon>
        <taxon>Mycobacterium</taxon>
        <taxon>Mycobacterium avium complex (MAC)</taxon>
    </lineage>
</organism>
<gene>
    <name evidence="1" type="primary">mraZ</name>
    <name type="ordered locus">MAP_1906c</name>
</gene>